<dbReference type="EC" id="3.1.21.10" evidence="1"/>
<dbReference type="EMBL" id="CP000407">
    <property type="protein sequence ID" value="ABP89382.1"/>
    <property type="molecule type" value="Genomic_DNA"/>
</dbReference>
<dbReference type="SMR" id="A4VTE3"/>
<dbReference type="STRING" id="391295.SSU05_0415"/>
<dbReference type="KEGG" id="ssu:SSU05_0415"/>
<dbReference type="eggNOG" id="COG3331">
    <property type="taxonomic scope" value="Bacteria"/>
</dbReference>
<dbReference type="HOGENOM" id="CLU_096340_0_0_9"/>
<dbReference type="GO" id="GO:0005737">
    <property type="term" value="C:cytoplasm"/>
    <property type="evidence" value="ECO:0007669"/>
    <property type="project" value="UniProtKB-SubCell"/>
</dbReference>
<dbReference type="GO" id="GO:0004519">
    <property type="term" value="F:endonuclease activity"/>
    <property type="evidence" value="ECO:0007669"/>
    <property type="project" value="UniProtKB-UniRule"/>
</dbReference>
<dbReference type="GO" id="GO:0000287">
    <property type="term" value="F:magnesium ion binding"/>
    <property type="evidence" value="ECO:0007669"/>
    <property type="project" value="UniProtKB-UniRule"/>
</dbReference>
<dbReference type="GO" id="GO:0003676">
    <property type="term" value="F:nucleic acid binding"/>
    <property type="evidence" value="ECO:0007669"/>
    <property type="project" value="InterPro"/>
</dbReference>
<dbReference type="GO" id="GO:0007059">
    <property type="term" value="P:chromosome segregation"/>
    <property type="evidence" value="ECO:0007669"/>
    <property type="project" value="UniProtKB-UniRule"/>
</dbReference>
<dbReference type="GO" id="GO:0006310">
    <property type="term" value="P:DNA recombination"/>
    <property type="evidence" value="ECO:0007669"/>
    <property type="project" value="UniProtKB-UniRule"/>
</dbReference>
<dbReference type="GO" id="GO:0006281">
    <property type="term" value="P:DNA repair"/>
    <property type="evidence" value="ECO:0007669"/>
    <property type="project" value="UniProtKB-UniRule"/>
</dbReference>
<dbReference type="CDD" id="cd22354">
    <property type="entry name" value="RecU-like"/>
    <property type="match status" value="1"/>
</dbReference>
<dbReference type="Gene3D" id="3.40.1350.10">
    <property type="match status" value="1"/>
</dbReference>
<dbReference type="HAMAP" id="MF_00130">
    <property type="entry name" value="RecU"/>
    <property type="match status" value="1"/>
</dbReference>
<dbReference type="InterPro" id="IPR004612">
    <property type="entry name" value="Resolv_RecU"/>
</dbReference>
<dbReference type="InterPro" id="IPR011335">
    <property type="entry name" value="Restrct_endonuc-II-like"/>
</dbReference>
<dbReference type="InterPro" id="IPR011856">
    <property type="entry name" value="tRNA_endonuc-like_dom_sf"/>
</dbReference>
<dbReference type="NCBIfam" id="NF002580">
    <property type="entry name" value="PRK02234.1-1"/>
    <property type="match status" value="1"/>
</dbReference>
<dbReference type="NCBIfam" id="NF002584">
    <property type="entry name" value="PRK02234.1-5"/>
    <property type="match status" value="1"/>
</dbReference>
<dbReference type="NCBIfam" id="TIGR00648">
    <property type="entry name" value="recU"/>
    <property type="match status" value="1"/>
</dbReference>
<dbReference type="Pfam" id="PF03838">
    <property type="entry name" value="RecU"/>
    <property type="match status" value="1"/>
</dbReference>
<dbReference type="PIRSF" id="PIRSF037785">
    <property type="entry name" value="RecU"/>
    <property type="match status" value="1"/>
</dbReference>
<dbReference type="SUPFAM" id="SSF52980">
    <property type="entry name" value="Restriction endonuclease-like"/>
    <property type="match status" value="1"/>
</dbReference>
<comment type="function">
    <text evidence="1">Endonuclease that resolves Holliday junction intermediates in genetic recombination. Cleaves mobile four-strand junctions by introducing symmetrical nicks in paired strands. Promotes annealing of linear ssDNA with homologous dsDNA. Required for DNA repair, homologous recombination and chromosome segregation.</text>
</comment>
<comment type="catalytic activity">
    <reaction evidence="1">
        <text>Endonucleolytic cleavage at a junction such as a reciprocal single-stranded crossover between two homologous DNA duplexes (Holliday junction).</text>
        <dbReference type="EC" id="3.1.21.10"/>
    </reaction>
</comment>
<comment type="cofactor">
    <cofactor evidence="1">
        <name>Mg(2+)</name>
        <dbReference type="ChEBI" id="CHEBI:18420"/>
    </cofactor>
    <text evidence="1">Binds 1 Mg(2+) ion per subunit.</text>
</comment>
<comment type="subcellular location">
    <subcellularLocation>
        <location evidence="1">Cytoplasm</location>
    </subcellularLocation>
</comment>
<comment type="similarity">
    <text evidence="1">Belongs to the RecU family.</text>
</comment>
<accession>A4VTE3</accession>
<name>RECU_STRSY</name>
<reference key="1">
    <citation type="journal article" date="2007" name="PLoS ONE">
        <title>A glimpse of streptococcal toxic shock syndrome from comparative genomics of S. suis 2 Chinese isolates.</title>
        <authorList>
            <person name="Chen C."/>
            <person name="Tang J."/>
            <person name="Dong W."/>
            <person name="Wang C."/>
            <person name="Feng Y."/>
            <person name="Wang J."/>
            <person name="Zheng F."/>
            <person name="Pan X."/>
            <person name="Liu D."/>
            <person name="Li M."/>
            <person name="Song Y."/>
            <person name="Zhu X."/>
            <person name="Sun H."/>
            <person name="Feng T."/>
            <person name="Guo Z."/>
            <person name="Ju A."/>
            <person name="Ge J."/>
            <person name="Dong Y."/>
            <person name="Sun W."/>
            <person name="Jiang Y."/>
            <person name="Wang J."/>
            <person name="Yan J."/>
            <person name="Yang H."/>
            <person name="Wang X."/>
            <person name="Gao G.F."/>
            <person name="Yang R."/>
            <person name="Wang J."/>
            <person name="Yu J."/>
        </authorList>
    </citation>
    <scope>NUCLEOTIDE SEQUENCE [LARGE SCALE GENOMIC DNA]</scope>
    <source>
        <strain>05ZYH33</strain>
    </source>
</reference>
<keyword id="KW-0963">Cytoplasm</keyword>
<keyword id="KW-0227">DNA damage</keyword>
<keyword id="KW-0233">DNA recombination</keyword>
<keyword id="KW-0234">DNA repair</keyword>
<keyword id="KW-0255">Endonuclease</keyword>
<keyword id="KW-0378">Hydrolase</keyword>
<keyword id="KW-0460">Magnesium</keyword>
<keyword id="KW-0479">Metal-binding</keyword>
<keyword id="KW-0540">Nuclease</keyword>
<organism>
    <name type="scientific">Streptococcus suis (strain 05ZYH33)</name>
    <dbReference type="NCBI Taxonomy" id="391295"/>
    <lineage>
        <taxon>Bacteria</taxon>
        <taxon>Bacillati</taxon>
        <taxon>Bacillota</taxon>
        <taxon>Bacilli</taxon>
        <taxon>Lactobacillales</taxon>
        <taxon>Streptococcaceae</taxon>
        <taxon>Streptococcus</taxon>
    </lineage>
</organism>
<evidence type="ECO:0000255" key="1">
    <source>
        <dbReference type="HAMAP-Rule" id="MF_00130"/>
    </source>
</evidence>
<gene>
    <name evidence="1" type="primary">recU</name>
    <name type="ordered locus">SSU05_0415</name>
</gene>
<feature type="chain" id="PRO_1000016756" description="Holliday junction resolvase RecU">
    <location>
        <begin position="1"/>
        <end position="205"/>
    </location>
</feature>
<feature type="binding site" evidence="1">
    <location>
        <position position="83"/>
    </location>
    <ligand>
        <name>Mg(2+)</name>
        <dbReference type="ChEBI" id="CHEBI:18420"/>
    </ligand>
</feature>
<feature type="binding site" evidence="1">
    <location>
        <position position="85"/>
    </location>
    <ligand>
        <name>Mg(2+)</name>
        <dbReference type="ChEBI" id="CHEBI:18420"/>
    </ligand>
</feature>
<feature type="binding site" evidence="1">
    <location>
        <position position="98"/>
    </location>
    <ligand>
        <name>Mg(2+)</name>
        <dbReference type="ChEBI" id="CHEBI:18420"/>
    </ligand>
</feature>
<feature type="binding site" evidence="1">
    <location>
        <position position="117"/>
    </location>
    <ligand>
        <name>Mg(2+)</name>
        <dbReference type="ChEBI" id="CHEBI:18420"/>
    </ligand>
</feature>
<feature type="site" description="Transition state stabilizer" evidence="1">
    <location>
        <position position="100"/>
    </location>
</feature>
<sequence>MVNYPHKVSKKINRTSPISSQRVNFANRGMSFEAAINDSNQYYLAHDIAVIHKKPTPVQIVKVDYPKRSRAKIVEAYFRQASTTDYSGVFKRHYIDFEAKETRQKASMPMKNFHAHQIEHMKQVVKQGGICFVLLHFSTLKETYLLPATHLIEFYQVDMGSKSMPLTFIRQYGFEIQMGRFPSIPYLEIVEKNLLGGESFENYNN</sequence>
<protein>
    <recommendedName>
        <fullName evidence="1">Holliday junction resolvase RecU</fullName>
        <ecNumber evidence="1">3.1.21.10</ecNumber>
    </recommendedName>
    <alternativeName>
        <fullName evidence="1">Recombination protein U homolog</fullName>
    </alternativeName>
</protein>
<proteinExistence type="inferred from homology"/>